<reference key="1">
    <citation type="journal article" date="1996" name="Genomics">
        <title>Isolation of three testis-specific genes (TSA303, TSA806, TSA903) by a differential mRNA display method.</title>
        <authorList>
            <person name="Ozaki K."/>
            <person name="Kuroki T."/>
            <person name="Hayashi S."/>
            <person name="Nakamura Y."/>
        </authorList>
    </citation>
    <scope>NUCLEOTIDE SEQUENCE [MRNA] (ISOFORM 1)</scope>
    <scope>VARIANT ALA-247</scope>
    <scope>TISSUE SPECIFICITY</scope>
    <source>
        <tissue>Testis</tissue>
    </source>
</reference>
<reference key="2">
    <citation type="journal article" date="2004" name="Nat. Genet.">
        <title>Complete sequencing and characterization of 21,243 full-length human cDNAs.</title>
        <authorList>
            <person name="Ota T."/>
            <person name="Suzuki Y."/>
            <person name="Nishikawa T."/>
            <person name="Otsuki T."/>
            <person name="Sugiyama T."/>
            <person name="Irie R."/>
            <person name="Wakamatsu A."/>
            <person name="Hayashi K."/>
            <person name="Sato H."/>
            <person name="Nagai K."/>
            <person name="Kimura K."/>
            <person name="Makita H."/>
            <person name="Sekine M."/>
            <person name="Obayashi M."/>
            <person name="Nishi T."/>
            <person name="Shibahara T."/>
            <person name="Tanaka T."/>
            <person name="Ishii S."/>
            <person name="Yamamoto J."/>
            <person name="Saito K."/>
            <person name="Kawai Y."/>
            <person name="Isono Y."/>
            <person name="Nakamura Y."/>
            <person name="Nagahari K."/>
            <person name="Murakami K."/>
            <person name="Yasuda T."/>
            <person name="Iwayanagi T."/>
            <person name="Wagatsuma M."/>
            <person name="Shiratori A."/>
            <person name="Sudo H."/>
            <person name="Hosoiri T."/>
            <person name="Kaku Y."/>
            <person name="Kodaira H."/>
            <person name="Kondo H."/>
            <person name="Sugawara M."/>
            <person name="Takahashi M."/>
            <person name="Kanda K."/>
            <person name="Yokoi T."/>
            <person name="Furuya T."/>
            <person name="Kikkawa E."/>
            <person name="Omura Y."/>
            <person name="Abe K."/>
            <person name="Kamihara K."/>
            <person name="Katsuta N."/>
            <person name="Sato K."/>
            <person name="Tanikawa M."/>
            <person name="Yamazaki M."/>
            <person name="Ninomiya K."/>
            <person name="Ishibashi T."/>
            <person name="Yamashita H."/>
            <person name="Murakawa K."/>
            <person name="Fujimori K."/>
            <person name="Tanai H."/>
            <person name="Kimata M."/>
            <person name="Watanabe M."/>
            <person name="Hiraoka S."/>
            <person name="Chiba Y."/>
            <person name="Ishida S."/>
            <person name="Ono Y."/>
            <person name="Takiguchi S."/>
            <person name="Watanabe S."/>
            <person name="Yosida M."/>
            <person name="Hotuta T."/>
            <person name="Kusano J."/>
            <person name="Kanehori K."/>
            <person name="Takahashi-Fujii A."/>
            <person name="Hara H."/>
            <person name="Tanase T.-O."/>
            <person name="Nomura Y."/>
            <person name="Togiya S."/>
            <person name="Komai F."/>
            <person name="Hara R."/>
            <person name="Takeuchi K."/>
            <person name="Arita M."/>
            <person name="Imose N."/>
            <person name="Musashino K."/>
            <person name="Yuuki H."/>
            <person name="Oshima A."/>
            <person name="Sasaki N."/>
            <person name="Aotsuka S."/>
            <person name="Yoshikawa Y."/>
            <person name="Matsunawa H."/>
            <person name="Ichihara T."/>
            <person name="Shiohata N."/>
            <person name="Sano S."/>
            <person name="Moriya S."/>
            <person name="Momiyama H."/>
            <person name="Satoh N."/>
            <person name="Takami S."/>
            <person name="Terashima Y."/>
            <person name="Suzuki O."/>
            <person name="Nakagawa S."/>
            <person name="Senoh A."/>
            <person name="Mizoguchi H."/>
            <person name="Goto Y."/>
            <person name="Shimizu F."/>
            <person name="Wakebe H."/>
            <person name="Hishigaki H."/>
            <person name="Watanabe T."/>
            <person name="Sugiyama A."/>
            <person name="Takemoto M."/>
            <person name="Kawakami B."/>
            <person name="Yamazaki M."/>
            <person name="Watanabe K."/>
            <person name="Kumagai A."/>
            <person name="Itakura S."/>
            <person name="Fukuzumi Y."/>
            <person name="Fujimori Y."/>
            <person name="Komiyama M."/>
            <person name="Tashiro H."/>
            <person name="Tanigami A."/>
            <person name="Fujiwara T."/>
            <person name="Ono T."/>
            <person name="Yamada K."/>
            <person name="Fujii Y."/>
            <person name="Ozaki K."/>
            <person name="Hirao M."/>
            <person name="Ohmori Y."/>
            <person name="Kawabata A."/>
            <person name="Hikiji T."/>
            <person name="Kobatake N."/>
            <person name="Inagaki H."/>
            <person name="Ikema Y."/>
            <person name="Okamoto S."/>
            <person name="Okitani R."/>
            <person name="Kawakami T."/>
            <person name="Noguchi S."/>
            <person name="Itoh T."/>
            <person name="Shigeta K."/>
            <person name="Senba T."/>
            <person name="Matsumura K."/>
            <person name="Nakajima Y."/>
            <person name="Mizuno T."/>
            <person name="Morinaga M."/>
            <person name="Sasaki M."/>
            <person name="Togashi T."/>
            <person name="Oyama M."/>
            <person name="Hata H."/>
            <person name="Watanabe M."/>
            <person name="Komatsu T."/>
            <person name="Mizushima-Sugano J."/>
            <person name="Satoh T."/>
            <person name="Shirai Y."/>
            <person name="Takahashi Y."/>
            <person name="Nakagawa K."/>
            <person name="Okumura K."/>
            <person name="Nagase T."/>
            <person name="Nomura N."/>
            <person name="Kikuchi H."/>
            <person name="Masuho Y."/>
            <person name="Yamashita R."/>
            <person name="Nakai K."/>
            <person name="Yada T."/>
            <person name="Nakamura Y."/>
            <person name="Ohara O."/>
            <person name="Isogai T."/>
            <person name="Sugano S."/>
        </authorList>
    </citation>
    <scope>NUCLEOTIDE SEQUENCE [LARGE SCALE MRNA] (ISOFORMS 2 AND 3)</scope>
    <source>
        <tissue>Testis</tissue>
    </source>
</reference>
<reference key="3">
    <citation type="journal article" date="2006" name="Nature">
        <title>DNA sequence of human chromosome 17 and analysis of rearrangement in the human lineage.</title>
        <authorList>
            <person name="Zody M.C."/>
            <person name="Garber M."/>
            <person name="Adams D.J."/>
            <person name="Sharpe T."/>
            <person name="Harrow J."/>
            <person name="Lupski J.R."/>
            <person name="Nicholson C."/>
            <person name="Searle S.M."/>
            <person name="Wilming L."/>
            <person name="Young S.K."/>
            <person name="Abouelleil A."/>
            <person name="Allen N.R."/>
            <person name="Bi W."/>
            <person name="Bloom T."/>
            <person name="Borowsky M.L."/>
            <person name="Bugalter B.E."/>
            <person name="Butler J."/>
            <person name="Chang J.L."/>
            <person name="Chen C.-K."/>
            <person name="Cook A."/>
            <person name="Corum B."/>
            <person name="Cuomo C.A."/>
            <person name="de Jong P.J."/>
            <person name="DeCaprio D."/>
            <person name="Dewar K."/>
            <person name="FitzGerald M."/>
            <person name="Gilbert J."/>
            <person name="Gibson R."/>
            <person name="Gnerre S."/>
            <person name="Goldstein S."/>
            <person name="Grafham D.V."/>
            <person name="Grocock R."/>
            <person name="Hafez N."/>
            <person name="Hagopian D.S."/>
            <person name="Hart E."/>
            <person name="Norman C.H."/>
            <person name="Humphray S."/>
            <person name="Jaffe D.B."/>
            <person name="Jones M."/>
            <person name="Kamal M."/>
            <person name="Khodiyar V.K."/>
            <person name="LaButti K."/>
            <person name="Laird G."/>
            <person name="Lehoczky J."/>
            <person name="Liu X."/>
            <person name="Lokyitsang T."/>
            <person name="Loveland J."/>
            <person name="Lui A."/>
            <person name="Macdonald P."/>
            <person name="Major J.E."/>
            <person name="Matthews L."/>
            <person name="Mauceli E."/>
            <person name="McCarroll S.A."/>
            <person name="Mihalev A.H."/>
            <person name="Mudge J."/>
            <person name="Nguyen C."/>
            <person name="Nicol R."/>
            <person name="O'Leary S.B."/>
            <person name="Osoegawa K."/>
            <person name="Schwartz D.C."/>
            <person name="Shaw-Smith C."/>
            <person name="Stankiewicz P."/>
            <person name="Steward C."/>
            <person name="Swarbreck D."/>
            <person name="Venkataraman V."/>
            <person name="Whittaker C.A."/>
            <person name="Yang X."/>
            <person name="Zimmer A.R."/>
            <person name="Bradley A."/>
            <person name="Hubbard T."/>
            <person name="Birren B.W."/>
            <person name="Rogers J."/>
            <person name="Lander E.S."/>
            <person name="Nusbaum C."/>
        </authorList>
    </citation>
    <scope>NUCLEOTIDE SEQUENCE [LARGE SCALE GENOMIC DNA]</scope>
</reference>
<reference key="4">
    <citation type="journal article" date="2004" name="Genome Res.">
        <title>The status, quality, and expansion of the NIH full-length cDNA project: the Mammalian Gene Collection (MGC).</title>
        <authorList>
            <consortium name="The MGC Project Team"/>
        </authorList>
    </citation>
    <scope>NUCLEOTIDE SEQUENCE [LARGE SCALE MRNA] (ISOFORM 1)</scope>
    <scope>VARIANTS GLN-17 AND ALA-48</scope>
    <source>
        <tissue>Testis</tissue>
    </source>
</reference>
<reference key="5">
    <citation type="journal article" date="2011" name="BMC Syst. Biol.">
        <title>Initial characterization of the human central proteome.</title>
        <authorList>
            <person name="Burkard T.R."/>
            <person name="Planyavsky M."/>
            <person name="Kaupe I."/>
            <person name="Breitwieser F.P."/>
            <person name="Buerckstuemmer T."/>
            <person name="Bennett K.L."/>
            <person name="Superti-Furga G."/>
            <person name="Colinge J."/>
        </authorList>
    </citation>
    <scope>IDENTIFICATION BY MASS SPECTROMETRY [LARGE SCALE ANALYSIS]</scope>
</reference>
<protein>
    <recommendedName>
        <fullName>T-complex protein 1 subunit zeta-2</fullName>
        <shortName>TCP-1-zeta-2</shortName>
    </recommendedName>
    <alternativeName>
        <fullName>CCT-zeta-2</fullName>
    </alternativeName>
    <alternativeName>
        <fullName>CCT-zeta-like</fullName>
    </alternativeName>
    <alternativeName>
        <fullName>Chaperonin containing T-complex polypeptide 1 subunit 6B</fullName>
    </alternativeName>
    <alternativeName>
        <fullName>TCP-1-zeta-like</fullName>
    </alternativeName>
    <alternativeName>
        <fullName>Testis-specific Tcp20</fullName>
    </alternativeName>
    <alternativeName>
        <fullName evidence="4">Testis-specific protein TSA303</fullName>
    </alternativeName>
</protein>
<keyword id="KW-0025">Alternative splicing</keyword>
<keyword id="KW-0067">ATP-binding</keyword>
<keyword id="KW-0143">Chaperone</keyword>
<keyword id="KW-0963">Cytoplasm</keyword>
<keyword id="KW-0547">Nucleotide-binding</keyword>
<keyword id="KW-1267">Proteomics identification</keyword>
<keyword id="KW-1185">Reference proteome</keyword>
<accession>Q92526</accession>
<accession>B4DX20</accession>
<accession>B4DYB0</accession>
<accession>Q8TC34</accession>
<evidence type="ECO:0000269" key="1">
    <source>
    </source>
</evidence>
<evidence type="ECO:0000269" key="2">
    <source>
    </source>
</evidence>
<evidence type="ECO:0000303" key="3">
    <source>
    </source>
</evidence>
<evidence type="ECO:0000303" key="4">
    <source>
    </source>
</evidence>
<evidence type="ECO:0000305" key="5"/>
<evidence type="ECO:0000305" key="6">
    <source>
    </source>
</evidence>
<dbReference type="EMBL" id="D78333">
    <property type="protein sequence ID" value="BAA11347.1"/>
    <property type="molecule type" value="mRNA"/>
</dbReference>
<dbReference type="EMBL" id="AK301773">
    <property type="protein sequence ID" value="BAG63232.1"/>
    <property type="molecule type" value="mRNA"/>
</dbReference>
<dbReference type="EMBL" id="AK302344">
    <property type="protein sequence ID" value="BAG63672.1"/>
    <property type="molecule type" value="mRNA"/>
</dbReference>
<dbReference type="EMBL" id="AC022903">
    <property type="status" value="NOT_ANNOTATED_CDS"/>
    <property type="molecule type" value="Genomic_DNA"/>
</dbReference>
<dbReference type="EMBL" id="BC026125">
    <property type="protein sequence ID" value="AAH26125.1"/>
    <property type="molecule type" value="mRNA"/>
</dbReference>
<dbReference type="EMBL" id="BC027591">
    <property type="protein sequence ID" value="AAH27591.1"/>
    <property type="molecule type" value="mRNA"/>
</dbReference>
<dbReference type="CCDS" id="CCDS32617.1">
    <molecule id="Q92526-1"/>
</dbReference>
<dbReference type="CCDS" id="CCDS54105.1">
    <molecule id="Q92526-2"/>
</dbReference>
<dbReference type="CCDS" id="CCDS54106.1">
    <molecule id="Q92526-3"/>
</dbReference>
<dbReference type="RefSeq" id="NP_001180458.1">
    <molecule id="Q92526-3"/>
    <property type="nucleotide sequence ID" value="NM_001193529.3"/>
</dbReference>
<dbReference type="RefSeq" id="NP_001180459.1">
    <molecule id="Q92526-2"/>
    <property type="nucleotide sequence ID" value="NM_001193530.2"/>
</dbReference>
<dbReference type="RefSeq" id="NP_006575.2">
    <molecule id="Q92526-1"/>
    <property type="nucleotide sequence ID" value="NM_006584.4"/>
</dbReference>
<dbReference type="SMR" id="Q92526"/>
<dbReference type="BioGRID" id="115932">
    <property type="interactions" value="229"/>
</dbReference>
<dbReference type="DIP" id="DIP-53269N"/>
<dbReference type="FunCoup" id="Q92526">
    <property type="interactions" value="1879"/>
</dbReference>
<dbReference type="IntAct" id="Q92526">
    <property type="interactions" value="148"/>
</dbReference>
<dbReference type="MINT" id="Q92526"/>
<dbReference type="STRING" id="9606.ENSP00000327191"/>
<dbReference type="GlyGen" id="Q92526">
    <property type="glycosylation" value="1 site, 1 O-linked glycan (1 site)"/>
</dbReference>
<dbReference type="iPTMnet" id="Q92526"/>
<dbReference type="PhosphoSitePlus" id="Q92526"/>
<dbReference type="SwissPalm" id="Q92526"/>
<dbReference type="BioMuta" id="CCT6B"/>
<dbReference type="DMDM" id="327478610"/>
<dbReference type="REPRODUCTION-2DPAGE" id="IPI00220656"/>
<dbReference type="jPOST" id="Q92526"/>
<dbReference type="MassIVE" id="Q92526"/>
<dbReference type="PaxDb" id="9606-ENSP00000327191"/>
<dbReference type="PeptideAtlas" id="Q92526"/>
<dbReference type="ProteomicsDB" id="5399"/>
<dbReference type="ProteomicsDB" id="75285">
    <molecule id="Q92526-1"/>
</dbReference>
<dbReference type="ProteomicsDB" id="75286">
    <molecule id="Q92526-2"/>
</dbReference>
<dbReference type="Pumba" id="Q92526"/>
<dbReference type="Antibodypedia" id="27366">
    <property type="antibodies" value="132 antibodies from 24 providers"/>
</dbReference>
<dbReference type="DNASU" id="10693"/>
<dbReference type="Ensembl" id="ENST00000314144.10">
    <molecule id="Q92526-1"/>
    <property type="protein sequence ID" value="ENSP00000327191.5"/>
    <property type="gene ID" value="ENSG00000132141.14"/>
</dbReference>
<dbReference type="Ensembl" id="ENST00000421975.7">
    <molecule id="Q92526-3"/>
    <property type="protein sequence ID" value="ENSP00000398044.3"/>
    <property type="gene ID" value="ENSG00000132141.14"/>
</dbReference>
<dbReference type="Ensembl" id="ENST00000436961.7">
    <molecule id="Q92526-2"/>
    <property type="protein sequence ID" value="ENSP00000400917.3"/>
    <property type="gene ID" value="ENSG00000132141.14"/>
</dbReference>
<dbReference type="GeneID" id="10693"/>
<dbReference type="KEGG" id="hsa:10693"/>
<dbReference type="MANE-Select" id="ENST00000314144.10">
    <property type="protein sequence ID" value="ENSP00000327191.5"/>
    <property type="RefSeq nucleotide sequence ID" value="NM_006584.4"/>
    <property type="RefSeq protein sequence ID" value="NP_006575.2"/>
</dbReference>
<dbReference type="UCSC" id="uc002hig.4">
    <molecule id="Q92526-1"/>
    <property type="organism name" value="human"/>
</dbReference>
<dbReference type="AGR" id="HGNC:1621"/>
<dbReference type="CTD" id="10693"/>
<dbReference type="DisGeNET" id="10693"/>
<dbReference type="GeneCards" id="CCT6B"/>
<dbReference type="HGNC" id="HGNC:1621">
    <property type="gene designation" value="CCT6B"/>
</dbReference>
<dbReference type="HPA" id="ENSG00000132141">
    <property type="expression patterns" value="Tissue enriched (testis)"/>
</dbReference>
<dbReference type="MalaCards" id="CCT6B"/>
<dbReference type="MIM" id="610730">
    <property type="type" value="gene"/>
</dbReference>
<dbReference type="neXtProt" id="NX_Q92526"/>
<dbReference type="OpenTargets" id="ENSG00000132141"/>
<dbReference type="PharmGKB" id="PA26184"/>
<dbReference type="VEuPathDB" id="HostDB:ENSG00000132141"/>
<dbReference type="eggNOG" id="KOG0359">
    <property type="taxonomic scope" value="Eukaryota"/>
</dbReference>
<dbReference type="GeneTree" id="ENSGT00940000156339"/>
<dbReference type="HOGENOM" id="CLU_008891_3_1_1"/>
<dbReference type="InParanoid" id="Q92526"/>
<dbReference type="OMA" id="KNAIEDX"/>
<dbReference type="OrthoDB" id="10052040at2759"/>
<dbReference type="PAN-GO" id="Q92526">
    <property type="GO annotations" value="3 GO annotations based on evolutionary models"/>
</dbReference>
<dbReference type="PhylomeDB" id="Q92526"/>
<dbReference type="TreeFam" id="TF106333"/>
<dbReference type="PathwayCommons" id="Q92526"/>
<dbReference type="Reactome" id="R-HSA-389957">
    <property type="pathway name" value="Prefoldin mediated transfer of substrate to CCT/TriC"/>
</dbReference>
<dbReference type="Reactome" id="R-HSA-389960">
    <property type="pathway name" value="Formation of tubulin folding intermediates by CCT/TriC"/>
</dbReference>
<dbReference type="Reactome" id="R-HSA-390450">
    <property type="pathway name" value="Folding of actin by CCT/TriC"/>
</dbReference>
<dbReference type="Reactome" id="R-HSA-390471">
    <property type="pathway name" value="Association of TriC/CCT with target proteins during biosynthesis"/>
</dbReference>
<dbReference type="Reactome" id="R-HSA-6814122">
    <property type="pathway name" value="Cooperation of PDCL (PhLP1) and TRiC/CCT in G-protein beta folding"/>
</dbReference>
<dbReference type="SignaLink" id="Q92526"/>
<dbReference type="BioGRID-ORCS" id="10693">
    <property type="hits" value="15 hits in 1157 CRISPR screens"/>
</dbReference>
<dbReference type="CD-CODE" id="91857CE7">
    <property type="entry name" value="Nucleolus"/>
</dbReference>
<dbReference type="CD-CODE" id="FB4E32DD">
    <property type="entry name" value="Presynaptic clusters and postsynaptic densities"/>
</dbReference>
<dbReference type="ChiTaRS" id="CCT6B">
    <property type="organism name" value="human"/>
</dbReference>
<dbReference type="GenomeRNAi" id="10693"/>
<dbReference type="Pharos" id="Q92526">
    <property type="development level" value="Tbio"/>
</dbReference>
<dbReference type="PRO" id="PR:Q92526"/>
<dbReference type="Proteomes" id="UP000005640">
    <property type="component" value="Chromosome 17"/>
</dbReference>
<dbReference type="RNAct" id="Q92526">
    <property type="molecule type" value="protein"/>
</dbReference>
<dbReference type="Bgee" id="ENSG00000132141">
    <property type="expression patterns" value="Expressed in sperm and 129 other cell types or tissues"/>
</dbReference>
<dbReference type="ExpressionAtlas" id="Q92526">
    <property type="expression patterns" value="baseline and differential"/>
</dbReference>
<dbReference type="GO" id="GO:0005832">
    <property type="term" value="C:chaperonin-containing T-complex"/>
    <property type="evidence" value="ECO:0000314"/>
    <property type="project" value="FlyBase"/>
</dbReference>
<dbReference type="GO" id="GO:0005829">
    <property type="term" value="C:cytosol"/>
    <property type="evidence" value="ECO:0000314"/>
    <property type="project" value="HPA"/>
</dbReference>
<dbReference type="GO" id="GO:0005524">
    <property type="term" value="F:ATP binding"/>
    <property type="evidence" value="ECO:0007669"/>
    <property type="project" value="UniProtKB-KW"/>
</dbReference>
<dbReference type="GO" id="GO:0016887">
    <property type="term" value="F:ATP hydrolysis activity"/>
    <property type="evidence" value="ECO:0007669"/>
    <property type="project" value="InterPro"/>
</dbReference>
<dbReference type="GO" id="GO:0140662">
    <property type="term" value="F:ATP-dependent protein folding chaperone"/>
    <property type="evidence" value="ECO:0007669"/>
    <property type="project" value="InterPro"/>
</dbReference>
<dbReference type="GO" id="GO:0044183">
    <property type="term" value="F:protein folding chaperone"/>
    <property type="evidence" value="ECO:0000314"/>
    <property type="project" value="FlyBase"/>
</dbReference>
<dbReference type="GO" id="GO:0051082">
    <property type="term" value="F:unfolded protein binding"/>
    <property type="evidence" value="ECO:0000318"/>
    <property type="project" value="GO_Central"/>
</dbReference>
<dbReference type="GO" id="GO:0006457">
    <property type="term" value="P:protein folding"/>
    <property type="evidence" value="ECO:0000314"/>
    <property type="project" value="FlyBase"/>
</dbReference>
<dbReference type="CDD" id="cd03342">
    <property type="entry name" value="TCP1_zeta"/>
    <property type="match status" value="1"/>
</dbReference>
<dbReference type="FunFam" id="1.10.560.10:FF:000038">
    <property type="entry name" value="Chaperonin containing TCP1 subunit 6B"/>
    <property type="match status" value="1"/>
</dbReference>
<dbReference type="FunFam" id="3.30.260.10:FF:000029">
    <property type="entry name" value="Chaperonin containing TCP1 subunit 6B"/>
    <property type="match status" value="1"/>
</dbReference>
<dbReference type="FunFam" id="1.10.560.10:FF:000022">
    <property type="entry name" value="T-complex protein 1 subunit zeta"/>
    <property type="match status" value="1"/>
</dbReference>
<dbReference type="FunFam" id="3.30.260.10:FF:000017">
    <property type="entry name" value="T-complex protein 1 subunit zeta"/>
    <property type="match status" value="1"/>
</dbReference>
<dbReference type="FunFam" id="3.50.7.10:FF:000004">
    <property type="entry name" value="T-complex protein 1 subunit zeta"/>
    <property type="match status" value="1"/>
</dbReference>
<dbReference type="Gene3D" id="3.50.7.10">
    <property type="entry name" value="GroEL"/>
    <property type="match status" value="1"/>
</dbReference>
<dbReference type="Gene3D" id="1.10.560.10">
    <property type="entry name" value="GroEL-like equatorial domain"/>
    <property type="match status" value="1"/>
</dbReference>
<dbReference type="Gene3D" id="3.30.260.10">
    <property type="entry name" value="TCP-1-like chaperonin intermediate domain"/>
    <property type="match status" value="1"/>
</dbReference>
<dbReference type="InterPro" id="IPR012722">
    <property type="entry name" value="Chap_CCT_zeta"/>
</dbReference>
<dbReference type="InterPro" id="IPR017998">
    <property type="entry name" value="Chaperone_TCP-1"/>
</dbReference>
<dbReference type="InterPro" id="IPR002194">
    <property type="entry name" value="Chaperonin_TCP-1_CS"/>
</dbReference>
<dbReference type="InterPro" id="IPR002423">
    <property type="entry name" value="Cpn60/GroEL/TCP-1"/>
</dbReference>
<dbReference type="InterPro" id="IPR027409">
    <property type="entry name" value="GroEL-like_apical_dom_sf"/>
</dbReference>
<dbReference type="InterPro" id="IPR027413">
    <property type="entry name" value="GROEL-like_equatorial_sf"/>
</dbReference>
<dbReference type="InterPro" id="IPR027410">
    <property type="entry name" value="TCP-1-like_intermed_sf"/>
</dbReference>
<dbReference type="InterPro" id="IPR053374">
    <property type="entry name" value="TCP-1_chaperonin"/>
</dbReference>
<dbReference type="NCBIfam" id="TIGR02347">
    <property type="entry name" value="chap_CCT_zeta"/>
    <property type="match status" value="1"/>
</dbReference>
<dbReference type="NCBIfam" id="NF041083">
    <property type="entry name" value="thermosome_beta"/>
    <property type="match status" value="1"/>
</dbReference>
<dbReference type="PANTHER" id="PTHR11353">
    <property type="entry name" value="CHAPERONIN"/>
    <property type="match status" value="1"/>
</dbReference>
<dbReference type="Pfam" id="PF00118">
    <property type="entry name" value="Cpn60_TCP1"/>
    <property type="match status" value="1"/>
</dbReference>
<dbReference type="PRINTS" id="PR00304">
    <property type="entry name" value="TCOMPLEXTCP1"/>
</dbReference>
<dbReference type="SUPFAM" id="SSF52029">
    <property type="entry name" value="GroEL apical domain-like"/>
    <property type="match status" value="1"/>
</dbReference>
<dbReference type="SUPFAM" id="SSF48592">
    <property type="entry name" value="GroEL equatorial domain-like"/>
    <property type="match status" value="1"/>
</dbReference>
<dbReference type="SUPFAM" id="SSF54849">
    <property type="entry name" value="GroEL-intermediate domain like"/>
    <property type="match status" value="1"/>
</dbReference>
<dbReference type="PROSITE" id="PS00750">
    <property type="entry name" value="TCP1_1"/>
    <property type="match status" value="1"/>
</dbReference>
<dbReference type="PROSITE" id="PS00751">
    <property type="entry name" value="TCP1_2"/>
    <property type="match status" value="1"/>
</dbReference>
<dbReference type="PROSITE" id="PS00995">
    <property type="entry name" value="TCP1_3"/>
    <property type="match status" value="1"/>
</dbReference>
<sequence>MAAIKAVNSKAEVARARAALAVNICAARGLQDVLRTNLGPKGTMKMLVSGAGDIKLTKDGNVLLDEMQIQHPTASLIAKVATAQDDVTGDGTTSNVLIIGELLKQADLYISEGLHPRIIAEGFEAAKIKALEVLEEVKVTKEMKRKILLDVARTSLQTKVHAELADVLTEVVVDSVLAVRRPGYPIDLFMVEIMEMKHKLGTDTKLIQGLVLDHGARHPDMKKRVEDAFILICNVSLEYEKTEVNSGFFYKTAEEKEKLVKAERKFIEDRVQKIIDLKDKVCAQSNKGFVVINQKGIDPFSLDSLAKHGIVALRRAKRRNMERLSLACGGMAVNSFEDLTVDCLGHAGLVYEYTLGEEKFTFIEECVNPCSVTLLVKGPNKHTLTQVKDAIRDGLRAIKNAIEDGCMVPGAGAIEVAMAEALVTYKNSIKGRARLGVQAFADALLIIPKVLAQNAGYDPQETLVKVQAEHVESKQLVGVDLNTGEPMVAADAGVWDNYCVKKQLLHSCTVIATNILLVDEIMRAGMSSLK</sequence>
<proteinExistence type="evidence at protein level"/>
<feature type="chain" id="PRO_0000128363" description="T-complex protein 1 subunit zeta-2">
    <location>
        <begin position="1"/>
        <end position="530"/>
    </location>
</feature>
<feature type="splice variant" id="VSP_043040" description="In isoform 2." evidence="3">
    <location>
        <begin position="68"/>
        <end position="112"/>
    </location>
</feature>
<feature type="splice variant" id="VSP_047129" description="In isoform 3." evidence="3">
    <location>
        <begin position="206"/>
        <end position="242"/>
    </location>
</feature>
<feature type="sequence variant" id="VAR_060297" description="In dbSNP:rs9635769." evidence="1">
    <original>R</original>
    <variation>Q</variation>
    <location>
        <position position="17"/>
    </location>
</feature>
<feature type="sequence variant" id="VAR_060298" description="In dbSNP:rs2230552." evidence="1">
    <original>V</original>
    <variation>A</variation>
    <location>
        <position position="48"/>
    </location>
</feature>
<feature type="sequence variant" id="VAR_057269" description="In dbSNP:rs2230553." evidence="2">
    <original>G</original>
    <variation>A</variation>
    <location>
        <position position="247"/>
    </location>
</feature>
<feature type="sequence conflict" description="In Ref. 1; BAA11347." evidence="5" ref="1">
    <original>AALAVNICAARGL</original>
    <variation>QLWLSIYAPPRV</variation>
    <location>
        <begin position="18"/>
        <end position="30"/>
    </location>
</feature>
<feature type="sequence conflict" description="In Ref. 1; BAA11347." evidence="5" ref="1">
    <original>D</original>
    <variation>G</variation>
    <location>
        <position position="86"/>
    </location>
</feature>
<feature type="sequence conflict" description="In Ref. 1; BAA11347." evidence="5" ref="1">
    <original>S</original>
    <variation>T</variation>
    <location>
        <position position="94"/>
    </location>
</feature>
<feature type="sequence conflict" description="In Ref. 1; BAA11347." evidence="5" ref="1">
    <original>VLA</original>
    <variation>LFP</variation>
    <location>
        <begin position="176"/>
        <end position="178"/>
    </location>
</feature>
<feature type="sequence conflict" description="In Ref. 1; BAA11347." evidence="5" ref="1">
    <original>G</original>
    <variation>P</variation>
    <location>
        <position position="183"/>
    </location>
</feature>
<feature type="sequence conflict" description="In Ref. 1; BAA11347." evidence="5" ref="1">
    <original>LK</original>
    <variation>QMMIEFKINPSRR</variation>
    <location>
        <begin position="529"/>
        <end position="530"/>
    </location>
</feature>
<comment type="function">
    <text evidence="6">Component of the chaperonin-containing T-complex (TRiC), a molecular chaperone complex that assists the folding of proteins upon ATP hydrolysis.</text>
</comment>
<comment type="subunit">
    <text evidence="6">Component of the chaperonin-containing T-complex (TRiC), a heterooligomeric complex of about 850 to 900 kDa that forms two stacked rings, 12 to 16 nm in diameter.</text>
</comment>
<comment type="interaction">
    <interactant intactId="EBI-2479962">
        <id>Q92526</id>
    </interactant>
    <interactant intactId="EBI-355018">
        <id>O96019</id>
        <label>ACTL6A</label>
    </interactant>
    <organismsDiffer>false</organismsDiffer>
    <experiments>3</experiments>
</comment>
<comment type="interaction">
    <interactant intactId="EBI-2479962">
        <id>Q92526</id>
    </interactant>
    <interactant intactId="EBI-749562">
        <id>Q96JB6</id>
        <label>LOXL4</label>
    </interactant>
    <organismsDiffer>false</organismsDiffer>
    <experiments>3</experiments>
</comment>
<comment type="interaction">
    <interactant intactId="EBI-2479962">
        <id>Q92526</id>
    </interactant>
    <interactant intactId="EBI-713543">
        <id>P53779</id>
        <label>MAPK10</label>
    </interactant>
    <organismsDiffer>false</organismsDiffer>
    <experiments>2</experiments>
</comment>
<comment type="interaction">
    <interactant intactId="EBI-2479962">
        <id>Q92526</id>
    </interactant>
    <interactant intactId="EBI-9775184">
        <id>Q9Y4U1</id>
        <label>MMACHC</label>
    </interactant>
    <organismsDiffer>false</organismsDiffer>
    <experiments>3</experiments>
</comment>
<comment type="interaction">
    <interactant intactId="EBI-2479962">
        <id>Q92526</id>
    </interactant>
    <interactant intactId="EBI-11682559">
        <id>Q16518</id>
        <label>RPE65</label>
    </interactant>
    <organismsDiffer>false</organismsDiffer>
    <experiments>3</experiments>
</comment>
<comment type="interaction">
    <interactant intactId="EBI-2479962">
        <id>Q92526</id>
    </interactant>
    <interactant intactId="EBI-11280109">
        <id>Q9UJT1</id>
        <label>TUBD1</label>
    </interactant>
    <organismsDiffer>false</organismsDiffer>
    <experiments>2</experiments>
</comment>
<comment type="subcellular location">
    <subcellularLocation>
        <location evidence="6">Cytoplasm</location>
    </subcellularLocation>
</comment>
<comment type="alternative products">
    <event type="alternative splicing"/>
    <isoform>
        <id>Q92526-1</id>
        <name>1</name>
        <sequence type="displayed"/>
    </isoform>
    <isoform>
        <id>Q92526-2</id>
        <name>2</name>
        <sequence type="described" ref="VSP_043040"/>
    </isoform>
    <isoform>
        <id>Q92526-3</id>
        <name>3</name>
        <sequence type="described" ref="VSP_047129"/>
    </isoform>
</comment>
<comment type="tissue specificity">
    <text evidence="2">Testis-specific.</text>
</comment>
<comment type="similarity">
    <text evidence="5">Belongs to the TCP-1 chaperonin family.</text>
</comment>
<gene>
    <name type="primary">CCT6B</name>
</gene>
<name>TCPW_HUMAN</name>
<organism>
    <name type="scientific">Homo sapiens</name>
    <name type="common">Human</name>
    <dbReference type="NCBI Taxonomy" id="9606"/>
    <lineage>
        <taxon>Eukaryota</taxon>
        <taxon>Metazoa</taxon>
        <taxon>Chordata</taxon>
        <taxon>Craniata</taxon>
        <taxon>Vertebrata</taxon>
        <taxon>Euteleostomi</taxon>
        <taxon>Mammalia</taxon>
        <taxon>Eutheria</taxon>
        <taxon>Euarchontoglires</taxon>
        <taxon>Primates</taxon>
        <taxon>Haplorrhini</taxon>
        <taxon>Catarrhini</taxon>
        <taxon>Hominidae</taxon>
        <taxon>Homo</taxon>
    </lineage>
</organism>